<dbReference type="EC" id="3.1.1.3" evidence="6"/>
<dbReference type="EMBL" id="AF188894">
    <property type="protein sequence ID" value="AAF35171.1"/>
    <property type="molecule type" value="Genomic_DNA"/>
</dbReference>
<dbReference type="EMBL" id="CP017623">
    <property type="protein sequence ID" value="AOW26590.1"/>
    <property type="molecule type" value="Genomic_DNA"/>
</dbReference>
<dbReference type="EMBL" id="U34807">
    <property type="protein sequence ID" value="AAC99990.1"/>
    <property type="molecule type" value="Genomic_DNA"/>
</dbReference>
<dbReference type="RefSeq" id="XP_723507.2">
    <property type="nucleotide sequence ID" value="XM_718414.2"/>
</dbReference>
<dbReference type="SMR" id="O94091"/>
<dbReference type="STRING" id="237561.O94091"/>
<dbReference type="ESTHER" id="canal-LIP1">
    <property type="family name" value="Fungal-Bact_LIP"/>
</dbReference>
<dbReference type="GlyCosmos" id="O94091">
    <property type="glycosylation" value="6 sites, No reported glycans"/>
</dbReference>
<dbReference type="EnsemblFungi" id="C1_09580C_A-T">
    <property type="protein sequence ID" value="C1_09580C_A-T-p1"/>
    <property type="gene ID" value="C1_09580C_A"/>
</dbReference>
<dbReference type="GeneID" id="3634888"/>
<dbReference type="KEGG" id="cal:CAALFM_C109580CA"/>
<dbReference type="CGD" id="CAL0000177069">
    <property type="gene designation" value="LIP1"/>
</dbReference>
<dbReference type="VEuPathDB" id="FungiDB:C1_09580C_A"/>
<dbReference type="VEuPathDB" id="FungiDB:CAWG_00472"/>
<dbReference type="eggNOG" id="ENOG502S2P7">
    <property type="taxonomic scope" value="Eukaryota"/>
</dbReference>
<dbReference type="InParanoid" id="A0A1D8PER6"/>
<dbReference type="OMA" id="EGCTIQN"/>
<dbReference type="OrthoDB" id="2373480at2759"/>
<dbReference type="PhylomeDB" id="O94091"/>
<dbReference type="Proteomes" id="UP000000559">
    <property type="component" value="Chromosome 1"/>
</dbReference>
<dbReference type="GO" id="GO:0005576">
    <property type="term" value="C:extracellular region"/>
    <property type="evidence" value="ECO:0000314"/>
    <property type="project" value="CGD"/>
</dbReference>
<dbReference type="GO" id="GO:0016298">
    <property type="term" value="F:lipase activity"/>
    <property type="evidence" value="ECO:0000314"/>
    <property type="project" value="CGD"/>
</dbReference>
<dbReference type="GO" id="GO:0004806">
    <property type="term" value="F:triacylglycerol lipase activity"/>
    <property type="evidence" value="ECO:0007669"/>
    <property type="project" value="UniProtKB-EC"/>
</dbReference>
<dbReference type="GO" id="GO:0016042">
    <property type="term" value="P:lipid catabolic process"/>
    <property type="evidence" value="ECO:0000314"/>
    <property type="project" value="CGD"/>
</dbReference>
<dbReference type="FunFam" id="1.10.260.130:FF:000001">
    <property type="entry name" value="Lipase 2"/>
    <property type="match status" value="1"/>
</dbReference>
<dbReference type="Gene3D" id="1.10.260.130">
    <property type="match status" value="1"/>
</dbReference>
<dbReference type="Gene3D" id="3.40.50.1820">
    <property type="entry name" value="alpha/beta hydrolase"/>
    <property type="match status" value="1"/>
</dbReference>
<dbReference type="InterPro" id="IPR029058">
    <property type="entry name" value="AB_hydrolase_fold"/>
</dbReference>
<dbReference type="InterPro" id="IPR005152">
    <property type="entry name" value="Lipase_secreted"/>
</dbReference>
<dbReference type="PANTHER" id="PTHR34853">
    <property type="match status" value="1"/>
</dbReference>
<dbReference type="PANTHER" id="PTHR34853:SF1">
    <property type="entry name" value="LIPASE 5"/>
    <property type="match status" value="1"/>
</dbReference>
<dbReference type="Pfam" id="PF03583">
    <property type="entry name" value="LIP"/>
    <property type="match status" value="1"/>
</dbReference>
<dbReference type="PIRSF" id="PIRSF029171">
    <property type="entry name" value="Esterase_LipA"/>
    <property type="match status" value="1"/>
</dbReference>
<dbReference type="SUPFAM" id="SSF53474">
    <property type="entry name" value="alpha/beta-Hydrolases"/>
    <property type="match status" value="1"/>
</dbReference>
<feature type="signal peptide" evidence="2">
    <location>
        <begin position="1"/>
        <end position="16"/>
    </location>
</feature>
<feature type="chain" id="PRO_0000017820" description="Lipase 1">
    <location>
        <begin position="17"/>
        <end position="468"/>
    </location>
</feature>
<feature type="active site" description="Charge relay system" evidence="1">
    <location>
        <position position="196"/>
    </location>
</feature>
<feature type="active site" description="Charge relay system" evidence="1">
    <location>
        <position position="348"/>
    </location>
</feature>
<feature type="active site" description="Charge relay system" evidence="1">
    <location>
        <position position="381"/>
    </location>
</feature>
<feature type="glycosylation site" description="N-linked (GlcNAc...) asparagine" evidence="2">
    <location>
        <position position="79"/>
    </location>
</feature>
<feature type="glycosylation site" description="N-linked (GlcNAc...) asparagine" evidence="2">
    <location>
        <position position="231"/>
    </location>
</feature>
<feature type="glycosylation site" description="N-linked (GlcNAc...) asparagine" evidence="2">
    <location>
        <position position="319"/>
    </location>
</feature>
<feature type="glycosylation site" description="N-linked (GlcNAc...) asparagine" evidence="2">
    <location>
        <position position="417"/>
    </location>
</feature>
<feature type="glycosylation site" description="N-linked (GlcNAc...) asparagine" evidence="2">
    <location>
        <position position="422"/>
    </location>
</feature>
<feature type="glycosylation site" description="N-linked (GlcNAc...) asparagine" evidence="2">
    <location>
        <position position="451"/>
    </location>
</feature>
<feature type="disulfide bond" evidence="1">
    <location>
        <begin position="112"/>
        <end position="285"/>
    </location>
</feature>
<feature type="disulfide bond" evidence="1">
    <location>
        <begin position="364"/>
        <end position="409"/>
    </location>
</feature>
<name>LIP1_CANAL</name>
<evidence type="ECO:0000250" key="1">
    <source>
        <dbReference type="UniProtKB" id="W3VKA4"/>
    </source>
</evidence>
<evidence type="ECO:0000255" key="2"/>
<evidence type="ECO:0000269" key="3">
    <source>
    </source>
</evidence>
<evidence type="ECO:0000269" key="4">
    <source>
    </source>
</evidence>
<evidence type="ECO:0000269" key="5">
    <source>
    </source>
</evidence>
<evidence type="ECO:0000269" key="6">
    <source>
    </source>
</evidence>
<evidence type="ECO:0000303" key="7">
    <source>
    </source>
</evidence>
<evidence type="ECO:0000305" key="8"/>
<evidence type="ECO:0000305" key="9">
    <source>
    </source>
</evidence>
<reference key="1">
    <citation type="journal article" date="2000" name="Arch. Microbiol.">
        <title>Secreted lipases of Candida albicans: cloning, characterisation and expression analysis of a new gene family with at least ten members.</title>
        <authorList>
            <person name="Hube B."/>
            <person name="Stehr F."/>
            <person name="Bossenz M."/>
            <person name="Mazur A."/>
            <person name="Kretschmar M."/>
            <person name="Schaefer W."/>
        </authorList>
    </citation>
    <scope>NUCLEOTIDE SEQUENCE [GENOMIC DNA]</scope>
    <scope>SUBCELLULAR LOCATION</scope>
    <scope>FUNCTION</scope>
    <scope>INDUCTION</scope>
    <source>
        <strain>1161</strain>
    </source>
</reference>
<reference key="2">
    <citation type="journal article" date="2004" name="Proc. Natl. Acad. Sci. U.S.A.">
        <title>The diploid genome sequence of Candida albicans.</title>
        <authorList>
            <person name="Jones T."/>
            <person name="Federspiel N.A."/>
            <person name="Chibana H."/>
            <person name="Dungan J."/>
            <person name="Kalman S."/>
            <person name="Magee B.B."/>
            <person name="Newport G."/>
            <person name="Thorstenson Y.R."/>
            <person name="Agabian N."/>
            <person name="Magee P.T."/>
            <person name="Davis R.W."/>
            <person name="Scherer S."/>
        </authorList>
    </citation>
    <scope>NUCLEOTIDE SEQUENCE [LARGE SCALE GENOMIC DNA]</scope>
    <source>
        <strain>SC5314 / ATCC MYA-2876</strain>
    </source>
</reference>
<reference key="3">
    <citation type="journal article" date="2007" name="Genome Biol.">
        <title>Assembly of the Candida albicans genome into sixteen supercontigs aligned on the eight chromosomes.</title>
        <authorList>
            <person name="van het Hoog M."/>
            <person name="Rast T.J."/>
            <person name="Martchenko M."/>
            <person name="Grindle S."/>
            <person name="Dignard D."/>
            <person name="Hogues H."/>
            <person name="Cuomo C."/>
            <person name="Berriman M."/>
            <person name="Scherer S."/>
            <person name="Magee B.B."/>
            <person name="Whiteway M."/>
            <person name="Chibana H."/>
            <person name="Nantel A."/>
            <person name="Magee P.T."/>
        </authorList>
    </citation>
    <scope>GENOME REANNOTATION</scope>
    <source>
        <strain>SC5314 / ATCC MYA-2876</strain>
    </source>
</reference>
<reference key="4">
    <citation type="journal article" date="2013" name="Genome Biol.">
        <title>Assembly of a phased diploid Candida albicans genome facilitates allele-specific measurements and provides a simple model for repeat and indel structure.</title>
        <authorList>
            <person name="Muzzey D."/>
            <person name="Schwartz K."/>
            <person name="Weissman J.S."/>
            <person name="Sherlock G."/>
        </authorList>
    </citation>
    <scope>NUCLEOTIDE SEQUENCE [LARGE SCALE GENOMIC DNA]</scope>
    <scope>GENOME REANNOTATION</scope>
    <source>
        <strain>SC5314 / ATCC MYA-2876</strain>
    </source>
</reference>
<reference key="5">
    <citation type="journal article" date="1997" name="Microbiology">
        <title>Cloning and characterization of a gene (LIP1) which encodes a lipase from the pathogenic yeast Candida albicans.</title>
        <authorList>
            <person name="Fu Y."/>
            <person name="Ibrahim A.S."/>
            <person name="Fonzi W."/>
            <person name="Zhou X."/>
            <person name="Ramos C.F."/>
            <person name="Ghannoum M.A."/>
        </authorList>
    </citation>
    <scope>NUCLEOTIDE SEQUENCE [GENOMIC DNA] OF 118-468</scope>
    <scope>FUNCTION</scope>
    <scope>CATALYTIC ACTIVITY</scope>
    <scope>INDUCTION</scope>
    <source>
        <strain>ATCC 36082</strain>
    </source>
</reference>
<reference key="6">
    <citation type="journal article" date="2004" name="FEMS Yeast Res.">
        <title>Expression analysis of the Candida albicans lipase gene family during experimental infections and in patient samples.</title>
        <authorList>
            <person name="Stehr F."/>
            <person name="Felk A."/>
            <person name="Gacser A."/>
            <person name="Kretschmar M."/>
            <person name="Maehnss B."/>
            <person name="Neuber K."/>
            <person name="Hube B."/>
            <person name="Schaefer W."/>
        </authorList>
    </citation>
    <scope>INDUCTION</scope>
</reference>
<reference key="7">
    <citation type="journal article" date="2005" name="FEMS Microbiol. Lett.">
        <title>Differential Candida albicans lipase gene expression during alimentary tract colonization and infection.</title>
        <authorList>
            <person name="Schofield D.A."/>
            <person name="Westwater C."/>
            <person name="Warner T."/>
            <person name="Balish E."/>
        </authorList>
    </citation>
    <scope>INDUCTION</scope>
</reference>
<reference key="8">
    <citation type="journal article" date="2011" name="Mol. Microbiol.">
        <title>Contribution of the glycolytic flux and hypoxia adaptation to efficient biofilm formation by Candida albicans.</title>
        <authorList>
            <person name="Bonhomme J."/>
            <person name="Chauvel M."/>
            <person name="Goyard S."/>
            <person name="Roux P."/>
            <person name="Rossignol T."/>
            <person name="d'Enfert C."/>
        </authorList>
    </citation>
    <scope>INDUCTION</scope>
</reference>
<sequence>MRGIAVFLAFISLIFASPLTVKSPLVDDFYTAPDGYESAKLGEILKLRKTPSKLSSMFFEIDIKNSWQLLVRSEDSFGNATAIVTTVIEPYNADPSKVLSYQTFEDSANIECSPSYGMQYGAPWSTVATQIDMALMVPMLKQGYYVVSPDYEGPKSTFTVGRQSGKATLDSIRAILKSNKFTGIKSDAKVAMWGYSGGSLASGWAAALQPKYAPELKKNLIGAALGGFVTNITATAEATDGTLFAGLVPNALSGLANEYPEFKEILYQKVSKAATDNLRQGTEHCIGGAILYFAEDQYFTGDDRAFPGGYGLLKEEVVNKTISENNLMQMDKDYLPDIPIFVYHGALDSIVPISNVHVTYKNWCDWGINSFEFSEDLLNGHITETIVGAPAAITWLEARFDGEPVVKGCKKTSRITNFSYPNISDSTSSIFEGILNSVTGSELGPGVTSDNITLDGLTGFLGNFIDLK</sequence>
<accession>O94091</accession>
<accession>A0A1D8PER6</accession>
<accession>Q9P8W6</accession>
<gene>
    <name evidence="7" type="primary">LIP1</name>
    <name type="ordered locus">CAALFM_C109580CA</name>
</gene>
<comment type="function">
    <text evidence="3 6 9">Secreted lipase that is able to hydrolyze both the neutral triacylglycerols and the monopalmitate ester Tween 40, allowing the use of hydrolyzed products as carbon sources (PubMed:11131027, PubMed:9043110). Has broad lipolytic activity, which may be important for colonization and subsequent infection, therefore contributing to the persistence and virulence in human tissue (Probable).</text>
</comment>
<comment type="catalytic activity">
    <reaction evidence="6">
        <text>a triacylglycerol + H2O = a diacylglycerol + a fatty acid + H(+)</text>
        <dbReference type="Rhea" id="RHEA:12044"/>
        <dbReference type="ChEBI" id="CHEBI:15377"/>
        <dbReference type="ChEBI" id="CHEBI:15378"/>
        <dbReference type="ChEBI" id="CHEBI:17855"/>
        <dbReference type="ChEBI" id="CHEBI:18035"/>
        <dbReference type="ChEBI" id="CHEBI:28868"/>
        <dbReference type="EC" id="3.1.1.3"/>
    </reaction>
    <physiologicalReaction direction="left-to-right" evidence="6">
        <dbReference type="Rhea" id="RHEA:12045"/>
    </physiologicalReaction>
</comment>
<comment type="subcellular location">
    <subcellularLocation>
        <location evidence="3">Secreted</location>
    </subcellularLocation>
</comment>
<comment type="induction">
    <text evidence="3 4 5 6">Expression is induced when cells are grown on media containing Tween 80, other Tweens or triglycerides as the sole carbon source, but not in Sabouraud Dextrose Broth or yeast/peptone/dextrose media (PubMed:9043110). Expression is up-regulated during the yeast-to-hyphal transition (PubMed:11131027). Expression is inhibited in the presence of carbohydrates (PubMed:9043110). During host infection, expressed in gastric tissues, but not in infected oral tissues (PubMed:15766791). Expression is induced during biofilm formation (PubMed:21414038).</text>
</comment>
<comment type="similarity">
    <text evidence="8">Belongs to the AB hydrolase superfamily. Lipase family. Class Lip subfamily.</text>
</comment>
<keyword id="KW-1015">Disulfide bond</keyword>
<keyword id="KW-0325">Glycoprotein</keyword>
<keyword id="KW-0378">Hydrolase</keyword>
<keyword id="KW-0442">Lipid degradation</keyword>
<keyword id="KW-0443">Lipid metabolism</keyword>
<keyword id="KW-1185">Reference proteome</keyword>
<keyword id="KW-0964">Secreted</keyword>
<keyword id="KW-0732">Signal</keyword>
<keyword id="KW-0843">Virulence</keyword>
<organism>
    <name type="scientific">Candida albicans (strain SC5314 / ATCC MYA-2876)</name>
    <name type="common">Yeast</name>
    <dbReference type="NCBI Taxonomy" id="237561"/>
    <lineage>
        <taxon>Eukaryota</taxon>
        <taxon>Fungi</taxon>
        <taxon>Dikarya</taxon>
        <taxon>Ascomycota</taxon>
        <taxon>Saccharomycotina</taxon>
        <taxon>Pichiomycetes</taxon>
        <taxon>Debaryomycetaceae</taxon>
        <taxon>Candida/Lodderomyces clade</taxon>
        <taxon>Candida</taxon>
    </lineage>
</organism>
<protein>
    <recommendedName>
        <fullName evidence="7">Lipase 1</fullName>
        <ecNumber evidence="6">3.1.1.3</ecNumber>
    </recommendedName>
</protein>
<proteinExistence type="evidence at protein level"/>